<accession>O93120</accession>
<accession>Q6J3C7</accession>
<organism>
    <name type="scientific">Vaccinia virus (strain Ankara)</name>
    <name type="common">VACV</name>
    <dbReference type="NCBI Taxonomy" id="126794"/>
    <lineage>
        <taxon>Viruses</taxon>
        <taxon>Varidnaviria</taxon>
        <taxon>Bamfordvirae</taxon>
        <taxon>Nucleocytoviricota</taxon>
        <taxon>Pokkesviricetes</taxon>
        <taxon>Chitovirales</taxon>
        <taxon>Poxviridae</taxon>
        <taxon>Chordopoxvirinae</taxon>
        <taxon>Orthopoxvirus</taxon>
        <taxon>Vaccinia virus</taxon>
    </lineage>
</organism>
<sequence length="637" mass="73845">MNTGIIDLFDNHVDSIPTILPHQLATLDYLVRTIIDENRSVLLFHIMGSGKTIIALLFALVASRFKKVYILVPNINILKIFNYNMGVAMNLFNDEFIAENIFIHSTTSFYSLNYNDNVINYNGLSRYNNSIFIVDEAHNIFGNNTGELMTVIKNKNKIPFLLLSGSPITNTPNTLGHIIDLMSEETIDFGEIISRGKKVIQTLLNERGVNVLKDLLKGRISYYEMPDKDLPTIRYHGRKFLDTRVVYCHMSKLQERDYMITRRQLCYHEMFDKNMYNVSMAVLGQLNLMNNLDTLFQEQDKELYPNLKINNGVLYGEELVTLNISSKFKYFINRIQTLNGKHFIYFSNSTYGGLVIKYIMLSNGYSEYNGSQGTNPHMINGKPKTFAIVTSKMKSSLEDLLDVYNSPENDDGSQLMFLFSSNIMSESYTLKEVRHIWFMTIPDTFSQYNQILGRSIRKFSYADISEPVNVYLLAAVYSDFNDEVTSLNDYTQDELINVLPFDIKKLLYLKFKTKETNRIYSILQEMSETYSLPPHPSIVKVLLGELVRQFFYNNSRIKYNDTKLLKMVTSVIKNKEDARNYIDDIVNGHFFVSNKVFDKSLLYKYENDIITVPFRLSYEPFVWGVNFRKEYNVVSSP</sequence>
<name>ETF1_VACCA</name>
<organismHost>
    <name type="scientific">Homo sapiens</name>
    <name type="common">Human</name>
    <dbReference type="NCBI Taxonomy" id="9606"/>
</organismHost>
<proteinExistence type="inferred from homology"/>
<comment type="function">
    <text evidence="1">Acts with RNA polymerase to initiate transcription from early gene promoters. Is recruited by the RPO-associated protein of 94 kDa RAP94/OPG109 to form the early transcription complex, which also contains the core RNA polymerase. ETF heterodimer binds to early gene promoters.</text>
</comment>
<comment type="subunit">
    <text evidence="1">Heterodimer of a 70 kDa and a 82 kDa subunit. Part of the early transcription complex composed of ETF, RAP94/OPG109, and the DNA-directed RNA polymerase.</text>
</comment>
<comment type="subcellular location">
    <subcellularLocation>
        <location evidence="1">Virion</location>
    </subcellularLocation>
    <text evidence="1">All the enzymes and other proteins required to synthesize early mRNAs are packaged within the virion core along with the DNA genome. This is necessary because viral early mRNAs are synthesized within minutes after virus entry into the cell and are extruded through pores in the core particle.</text>
</comment>
<comment type="similarity">
    <text evidence="4">Belongs to the helicase family. VETF subfamily.</text>
</comment>
<protein>
    <recommendedName>
        <fullName>Early transcription factor 70 kDa subunit</fullName>
        <ecNumber>3.6.4.-</ecNumber>
    </recommendedName>
    <alternativeName>
        <fullName>ATP-dependent helicase VETFS</fullName>
    </alternativeName>
    <alternativeName>
        <fullName>ETF small subunit</fullName>
    </alternativeName>
    <alternativeName>
        <fullName>VETF D6 subunit</fullName>
    </alternativeName>
    <alternativeName>
        <fullName>Vaccinia virus early transcription factor small subunit</fullName>
        <shortName>VETF small subunit</shortName>
    </alternativeName>
</protein>
<evidence type="ECO:0000250" key="1">
    <source>
        <dbReference type="UniProtKB" id="P04308"/>
    </source>
</evidence>
<evidence type="ECO:0000255" key="2">
    <source>
        <dbReference type="PROSITE-ProRule" id="PRU00541"/>
    </source>
</evidence>
<evidence type="ECO:0000255" key="3">
    <source>
        <dbReference type="PROSITE-ProRule" id="PRU00542"/>
    </source>
</evidence>
<evidence type="ECO:0000305" key="4"/>
<keyword id="KW-0010">Activator</keyword>
<keyword id="KW-0067">ATP-binding</keyword>
<keyword id="KW-0238">DNA-binding</keyword>
<keyword id="KW-0347">Helicase</keyword>
<keyword id="KW-0378">Hydrolase</keyword>
<keyword id="KW-0426">Late protein</keyword>
<keyword id="KW-0547">Nucleotide-binding</keyword>
<keyword id="KW-0804">Transcription</keyword>
<keyword id="KW-0805">Transcription regulation</keyword>
<keyword id="KW-0946">Virion</keyword>
<dbReference type="EC" id="3.6.4.-"/>
<dbReference type="EMBL" id="U94848">
    <property type="protein sequence ID" value="AAB96515.1"/>
    <property type="molecule type" value="Genomic_DNA"/>
</dbReference>
<dbReference type="EMBL" id="AY603355">
    <property type="protein sequence ID" value="AAT10501.1"/>
    <property type="molecule type" value="Genomic_DNA"/>
</dbReference>
<dbReference type="PIR" id="T37379">
    <property type="entry name" value="T37379"/>
</dbReference>
<dbReference type="SMR" id="O93120"/>
<dbReference type="Proteomes" id="UP000159908">
    <property type="component" value="Segment"/>
</dbReference>
<dbReference type="Proteomes" id="UP000172909">
    <property type="component" value="Segment"/>
</dbReference>
<dbReference type="GO" id="GO:0044423">
    <property type="term" value="C:virion component"/>
    <property type="evidence" value="ECO:0007669"/>
    <property type="project" value="UniProtKB-KW"/>
</dbReference>
<dbReference type="GO" id="GO:0005524">
    <property type="term" value="F:ATP binding"/>
    <property type="evidence" value="ECO:0007669"/>
    <property type="project" value="UniProtKB-KW"/>
</dbReference>
<dbReference type="GO" id="GO:0003677">
    <property type="term" value="F:DNA binding"/>
    <property type="evidence" value="ECO:0000250"/>
    <property type="project" value="UniProtKB"/>
</dbReference>
<dbReference type="GO" id="GO:0004386">
    <property type="term" value="F:helicase activity"/>
    <property type="evidence" value="ECO:0007669"/>
    <property type="project" value="UniProtKB-KW"/>
</dbReference>
<dbReference type="GO" id="GO:0016787">
    <property type="term" value="F:hydrolase activity"/>
    <property type="evidence" value="ECO:0007669"/>
    <property type="project" value="UniProtKB-KW"/>
</dbReference>
<dbReference type="CDD" id="cd18785">
    <property type="entry name" value="SF2_C"/>
    <property type="match status" value="1"/>
</dbReference>
<dbReference type="FunFam" id="3.40.50.300:FF:001785">
    <property type="entry name" value="Early gene transcription factor VETF small subunit"/>
    <property type="match status" value="1"/>
</dbReference>
<dbReference type="Gene3D" id="3.40.50.300">
    <property type="entry name" value="P-loop containing nucleotide triphosphate hydrolases"/>
    <property type="match status" value="2"/>
</dbReference>
<dbReference type="InterPro" id="IPR002464">
    <property type="entry name" value="DNA/RNA_helicase_DEAH_CS"/>
</dbReference>
<dbReference type="InterPro" id="IPR006935">
    <property type="entry name" value="Helicase/UvrB_N"/>
</dbReference>
<dbReference type="InterPro" id="IPR014001">
    <property type="entry name" value="Helicase_ATP-bd"/>
</dbReference>
<dbReference type="InterPro" id="IPR001650">
    <property type="entry name" value="Helicase_C-like"/>
</dbReference>
<dbReference type="InterPro" id="IPR027417">
    <property type="entry name" value="P-loop_NTPase"/>
</dbReference>
<dbReference type="Pfam" id="PF00271">
    <property type="entry name" value="Helicase_C"/>
    <property type="match status" value="1"/>
</dbReference>
<dbReference type="Pfam" id="PF04851">
    <property type="entry name" value="ResIII"/>
    <property type="match status" value="1"/>
</dbReference>
<dbReference type="SMART" id="SM00487">
    <property type="entry name" value="DEXDc"/>
    <property type="match status" value="1"/>
</dbReference>
<dbReference type="SMART" id="SM00490">
    <property type="entry name" value="HELICc"/>
    <property type="match status" value="1"/>
</dbReference>
<dbReference type="SUPFAM" id="SSF52540">
    <property type="entry name" value="P-loop containing nucleoside triphosphate hydrolases"/>
    <property type="match status" value="1"/>
</dbReference>
<dbReference type="PROSITE" id="PS00690">
    <property type="entry name" value="DEAH_ATP_HELICASE"/>
    <property type="match status" value="1"/>
</dbReference>
<dbReference type="PROSITE" id="PS51192">
    <property type="entry name" value="HELICASE_ATP_BIND_1"/>
    <property type="match status" value="1"/>
</dbReference>
<dbReference type="PROSITE" id="PS51194">
    <property type="entry name" value="HELICASE_CTER"/>
    <property type="match status" value="1"/>
</dbReference>
<reference key="1">
    <citation type="journal article" date="1998" name="Virology">
        <title>The complete genomic sequence of the modified vaccinia Ankara strain: comparison with other orthopoxviruses.</title>
        <authorList>
            <person name="Antoine G."/>
            <person name="Scheiflinger F."/>
            <person name="Dorner F."/>
            <person name="Falkner F.G."/>
        </authorList>
    </citation>
    <scope>NUCLEOTIDE SEQUENCE [LARGE SCALE GENOMIC DNA]</scope>
</reference>
<reference key="2">
    <citation type="submission" date="2004-04" db="EMBL/GenBank/DDBJ databases">
        <authorList>
            <person name="Esposito J.J."/>
            <person name="Frace M."/>
            <person name="Sammons S.A."/>
            <person name="Olsen-Rasmussen M.S."/>
            <person name="Osborne J."/>
            <person name="Khristova M."/>
            <person name="Wohlhueter R.M."/>
        </authorList>
    </citation>
    <scope>NUCLEOTIDE SEQUENCE [LARGE SCALE GENOMIC DNA]</scope>
    <source>
        <strain>Isolate Acambis 3000</strain>
    </source>
</reference>
<gene>
    <name type="primary">OPG118</name>
    <name type="synonym">VETFS</name>
    <name type="ordered locus">MVA103R</name>
    <name type="ordered locus">ACAM3000_MVA_103</name>
    <name type="ORF">D6R</name>
</gene>
<feature type="chain" id="PRO_0000099068" description="Early transcription factor 70 kDa subunit">
    <location>
        <begin position="1"/>
        <end position="637"/>
    </location>
</feature>
<feature type="domain" description="Helicase ATP-binding" evidence="2">
    <location>
        <begin position="32"/>
        <end position="185"/>
    </location>
</feature>
<feature type="domain" description="Helicase C-terminal" evidence="3">
    <location>
        <begin position="327"/>
        <end position="507"/>
    </location>
</feature>
<feature type="short sequence motif" description="DEXH box">
    <location>
        <begin position="135"/>
        <end position="138"/>
    </location>
</feature>
<feature type="binding site" evidence="2">
    <location>
        <begin position="45"/>
        <end position="52"/>
    </location>
    <ligand>
        <name>ATP</name>
        <dbReference type="ChEBI" id="CHEBI:30616"/>
    </ligand>
</feature>